<accession>Q8ZH78</accession>
<accession>Q0WI14</accession>
<accession>Q74S37</accession>
<accession>Q7CH06</accession>
<evidence type="ECO:0000255" key="1">
    <source>
        <dbReference type="HAMAP-Rule" id="MF_01551"/>
    </source>
</evidence>
<protein>
    <recommendedName>
        <fullName evidence="1">Ribosomal RNA large subunit methyltransferase M</fullName>
        <ecNumber evidence="1">2.1.1.186</ecNumber>
    </recommendedName>
    <alternativeName>
        <fullName evidence="1">23S rRNA (cytidine2498-2'-O)-methyltransferase</fullName>
    </alternativeName>
    <alternativeName>
        <fullName evidence="1">23S rRNA 2'-O-ribose methyltransferase RlmM</fullName>
    </alternativeName>
</protein>
<feature type="chain" id="PRO_0000070439" description="Ribosomal RNA large subunit methyltransferase M">
    <location>
        <begin position="1"/>
        <end position="368"/>
    </location>
</feature>
<feature type="active site" description="Proton acceptor" evidence="1">
    <location>
        <position position="307"/>
    </location>
</feature>
<feature type="binding site" evidence="1">
    <location>
        <position position="189"/>
    </location>
    <ligand>
        <name>S-adenosyl-L-methionine</name>
        <dbReference type="ChEBI" id="CHEBI:59789"/>
    </ligand>
</feature>
<feature type="binding site" evidence="1">
    <location>
        <begin position="222"/>
        <end position="225"/>
    </location>
    <ligand>
        <name>S-adenosyl-L-methionine</name>
        <dbReference type="ChEBI" id="CHEBI:59789"/>
    </ligand>
</feature>
<feature type="binding site" evidence="1">
    <location>
        <position position="241"/>
    </location>
    <ligand>
        <name>S-adenosyl-L-methionine</name>
        <dbReference type="ChEBI" id="CHEBI:59789"/>
    </ligand>
</feature>
<feature type="binding site" evidence="1">
    <location>
        <position position="261"/>
    </location>
    <ligand>
        <name>S-adenosyl-L-methionine</name>
        <dbReference type="ChEBI" id="CHEBI:59789"/>
    </ligand>
</feature>
<feature type="binding site" evidence="1">
    <location>
        <position position="278"/>
    </location>
    <ligand>
        <name>S-adenosyl-L-methionine</name>
        <dbReference type="ChEBI" id="CHEBI:59789"/>
    </ligand>
</feature>
<keyword id="KW-0963">Cytoplasm</keyword>
<keyword id="KW-0489">Methyltransferase</keyword>
<keyword id="KW-1185">Reference proteome</keyword>
<keyword id="KW-0698">rRNA processing</keyword>
<keyword id="KW-0949">S-adenosyl-L-methionine</keyword>
<keyword id="KW-0808">Transferase</keyword>
<dbReference type="EC" id="2.1.1.186" evidence="1"/>
<dbReference type="EMBL" id="AL590842">
    <property type="protein sequence ID" value="CAL19696.1"/>
    <property type="molecule type" value="Genomic_DNA"/>
</dbReference>
<dbReference type="EMBL" id="AE009952">
    <property type="protein sequence ID" value="AAM86702.1"/>
    <property type="molecule type" value="Genomic_DNA"/>
</dbReference>
<dbReference type="EMBL" id="AE017042">
    <property type="protein sequence ID" value="AAS63004.1"/>
    <property type="molecule type" value="Genomic_DNA"/>
</dbReference>
<dbReference type="PIR" id="AF0126">
    <property type="entry name" value="AF0126"/>
</dbReference>
<dbReference type="RefSeq" id="WP_002212119.1">
    <property type="nucleotide sequence ID" value="NZ_WUCM01000007.1"/>
</dbReference>
<dbReference type="RefSeq" id="YP_002346074.1">
    <property type="nucleotide sequence ID" value="NC_003143.1"/>
</dbReference>
<dbReference type="SMR" id="Q8ZH78"/>
<dbReference type="STRING" id="214092.YPO1031"/>
<dbReference type="PaxDb" id="214092-YPO1031"/>
<dbReference type="DNASU" id="1148099"/>
<dbReference type="EnsemblBacteria" id="AAS63004">
    <property type="protein sequence ID" value="AAS63004"/>
    <property type="gene ID" value="YP_2820"/>
</dbReference>
<dbReference type="GeneID" id="57977530"/>
<dbReference type="KEGG" id="ype:YPO1031"/>
<dbReference type="KEGG" id="ypk:y3152"/>
<dbReference type="KEGG" id="ypm:YP_2820"/>
<dbReference type="PATRIC" id="fig|214092.21.peg.1319"/>
<dbReference type="eggNOG" id="COG2933">
    <property type="taxonomic scope" value="Bacteria"/>
</dbReference>
<dbReference type="HOGENOM" id="CLU_043780_0_0_6"/>
<dbReference type="OMA" id="PVDWMVC"/>
<dbReference type="OrthoDB" id="154490at2"/>
<dbReference type="Proteomes" id="UP000000815">
    <property type="component" value="Chromosome"/>
</dbReference>
<dbReference type="Proteomes" id="UP000001019">
    <property type="component" value="Chromosome"/>
</dbReference>
<dbReference type="Proteomes" id="UP000002490">
    <property type="component" value="Chromosome"/>
</dbReference>
<dbReference type="GO" id="GO:0005737">
    <property type="term" value="C:cytoplasm"/>
    <property type="evidence" value="ECO:0007669"/>
    <property type="project" value="UniProtKB-SubCell"/>
</dbReference>
<dbReference type="GO" id="GO:0070677">
    <property type="term" value="F:rRNA (cytosine-2'-O-)-methyltransferase activity"/>
    <property type="evidence" value="ECO:0000318"/>
    <property type="project" value="GO_Central"/>
</dbReference>
<dbReference type="GO" id="GO:0006364">
    <property type="term" value="P:rRNA processing"/>
    <property type="evidence" value="ECO:0000318"/>
    <property type="project" value="GO_Central"/>
</dbReference>
<dbReference type="Gene3D" id="3.30.2300.20">
    <property type="match status" value="1"/>
</dbReference>
<dbReference type="Gene3D" id="3.30.70.2810">
    <property type="match status" value="1"/>
</dbReference>
<dbReference type="Gene3D" id="3.40.50.150">
    <property type="entry name" value="Vaccinia Virus protein VP39"/>
    <property type="match status" value="1"/>
</dbReference>
<dbReference type="HAMAP" id="MF_01551">
    <property type="entry name" value="23SrRNA_methyltr_M"/>
    <property type="match status" value="1"/>
</dbReference>
<dbReference type="InterPro" id="IPR040739">
    <property type="entry name" value="RlmM_FDX"/>
</dbReference>
<dbReference type="InterPro" id="IPR048646">
    <property type="entry name" value="RlmM_THUMP-like"/>
</dbReference>
<dbReference type="InterPro" id="IPR002877">
    <property type="entry name" value="RNA_MeTrfase_FtsJ_dom"/>
</dbReference>
<dbReference type="InterPro" id="IPR011224">
    <property type="entry name" value="rRNA_MeTrfase_M"/>
</dbReference>
<dbReference type="InterPro" id="IPR029063">
    <property type="entry name" value="SAM-dependent_MTases_sf"/>
</dbReference>
<dbReference type="NCBIfam" id="NF008734">
    <property type="entry name" value="PRK11760.1"/>
    <property type="match status" value="1"/>
</dbReference>
<dbReference type="PANTHER" id="PTHR37524">
    <property type="entry name" value="RIBOSOMAL RNA LARGE SUBUNIT METHYLTRANSFERASE M"/>
    <property type="match status" value="1"/>
</dbReference>
<dbReference type="PANTHER" id="PTHR37524:SF2">
    <property type="entry name" value="RIBOSOMAL RNA METHYLTRANSFERASE FTSJ DOMAIN-CONTAINING PROTEIN"/>
    <property type="match status" value="1"/>
</dbReference>
<dbReference type="Pfam" id="PF01728">
    <property type="entry name" value="FtsJ"/>
    <property type="match status" value="1"/>
</dbReference>
<dbReference type="Pfam" id="PF18125">
    <property type="entry name" value="RlmM_FDX"/>
    <property type="match status" value="1"/>
</dbReference>
<dbReference type="Pfam" id="PF21239">
    <property type="entry name" value="RLMM_N"/>
    <property type="match status" value="1"/>
</dbReference>
<dbReference type="PIRSF" id="PIRSF028774">
    <property type="entry name" value="UCP028774"/>
    <property type="match status" value="1"/>
</dbReference>
<dbReference type="SUPFAM" id="SSF53335">
    <property type="entry name" value="S-adenosyl-L-methionine-dependent methyltransferases"/>
    <property type="match status" value="1"/>
</dbReference>
<name>RLMM_YERPE</name>
<sequence>MNNKIALYCRSGFEKECAAEITEKAAQLEIFGFARVKENSGYVLFECYQLEDADRLIREIPFREFIFARQMMVVGELLKDLPPEDRVSPIVGMLVGVIEKAGELRVEVADTNESKELLKFCRKLTVPLRSALREQKILSARENAHRPVVHVFFIAPGCCYVGYSYSNNNSPFYMGIPRLKFPSDAPSRSTLKLEEAFHVFIPADEWEERLASGMHAVDLGACPGGWTYQLVQRSMMIQAVDNGLMAQSLMDTGQVTHHRADGFKYEPTRSNIYWLVCDMVEKPTKVTQLITKWLVNGWCREAIFNLKLPMKKRYEEVVQNLAMMDEQLKENGINADIHAKQLYHDREEVTVHVRRIWSGAPGRRDERY</sequence>
<proteinExistence type="inferred from homology"/>
<gene>
    <name evidence="1" type="primary">rlmM</name>
    <name type="ordered locus">YPO1031</name>
    <name type="ordered locus">y3152</name>
    <name type="ordered locus">YP_2820</name>
</gene>
<reference key="1">
    <citation type="journal article" date="2001" name="Nature">
        <title>Genome sequence of Yersinia pestis, the causative agent of plague.</title>
        <authorList>
            <person name="Parkhill J."/>
            <person name="Wren B.W."/>
            <person name="Thomson N.R."/>
            <person name="Titball R.W."/>
            <person name="Holden M.T.G."/>
            <person name="Prentice M.B."/>
            <person name="Sebaihia M."/>
            <person name="James K.D."/>
            <person name="Churcher C.M."/>
            <person name="Mungall K.L."/>
            <person name="Baker S."/>
            <person name="Basham D."/>
            <person name="Bentley S.D."/>
            <person name="Brooks K."/>
            <person name="Cerdeno-Tarraga A.-M."/>
            <person name="Chillingworth T."/>
            <person name="Cronin A."/>
            <person name="Davies R.M."/>
            <person name="Davis P."/>
            <person name="Dougan G."/>
            <person name="Feltwell T."/>
            <person name="Hamlin N."/>
            <person name="Holroyd S."/>
            <person name="Jagels K."/>
            <person name="Karlyshev A.V."/>
            <person name="Leather S."/>
            <person name="Moule S."/>
            <person name="Oyston P.C.F."/>
            <person name="Quail M.A."/>
            <person name="Rutherford K.M."/>
            <person name="Simmonds M."/>
            <person name="Skelton J."/>
            <person name="Stevens K."/>
            <person name="Whitehead S."/>
            <person name="Barrell B.G."/>
        </authorList>
    </citation>
    <scope>NUCLEOTIDE SEQUENCE [LARGE SCALE GENOMIC DNA]</scope>
    <source>
        <strain>CO-92 / Biovar Orientalis</strain>
    </source>
</reference>
<reference key="2">
    <citation type="journal article" date="2002" name="J. Bacteriol.">
        <title>Genome sequence of Yersinia pestis KIM.</title>
        <authorList>
            <person name="Deng W."/>
            <person name="Burland V."/>
            <person name="Plunkett G. III"/>
            <person name="Boutin A."/>
            <person name="Mayhew G.F."/>
            <person name="Liss P."/>
            <person name="Perna N.T."/>
            <person name="Rose D.J."/>
            <person name="Mau B."/>
            <person name="Zhou S."/>
            <person name="Schwartz D.C."/>
            <person name="Fetherston J.D."/>
            <person name="Lindler L.E."/>
            <person name="Brubaker R.R."/>
            <person name="Plano G.V."/>
            <person name="Straley S.C."/>
            <person name="McDonough K.A."/>
            <person name="Nilles M.L."/>
            <person name="Matson J.S."/>
            <person name="Blattner F.R."/>
            <person name="Perry R.D."/>
        </authorList>
    </citation>
    <scope>NUCLEOTIDE SEQUENCE [LARGE SCALE GENOMIC DNA]</scope>
    <source>
        <strain>KIM10+ / Biovar Mediaevalis</strain>
    </source>
</reference>
<reference key="3">
    <citation type="journal article" date="2004" name="DNA Res.">
        <title>Complete genome sequence of Yersinia pestis strain 91001, an isolate avirulent to humans.</title>
        <authorList>
            <person name="Song Y."/>
            <person name="Tong Z."/>
            <person name="Wang J."/>
            <person name="Wang L."/>
            <person name="Guo Z."/>
            <person name="Han Y."/>
            <person name="Zhang J."/>
            <person name="Pei D."/>
            <person name="Zhou D."/>
            <person name="Qin H."/>
            <person name="Pang X."/>
            <person name="Han Y."/>
            <person name="Zhai J."/>
            <person name="Li M."/>
            <person name="Cui B."/>
            <person name="Qi Z."/>
            <person name="Jin L."/>
            <person name="Dai R."/>
            <person name="Chen F."/>
            <person name="Li S."/>
            <person name="Ye C."/>
            <person name="Du Z."/>
            <person name="Lin W."/>
            <person name="Wang J."/>
            <person name="Yu J."/>
            <person name="Yang H."/>
            <person name="Wang J."/>
            <person name="Huang P."/>
            <person name="Yang R."/>
        </authorList>
    </citation>
    <scope>NUCLEOTIDE SEQUENCE [LARGE SCALE GENOMIC DNA]</scope>
    <source>
        <strain>91001 / Biovar Mediaevalis</strain>
    </source>
</reference>
<comment type="function">
    <text evidence="1">Catalyzes the 2'-O-methylation at nucleotide C2498 in 23S rRNA.</text>
</comment>
<comment type="catalytic activity">
    <reaction evidence="1">
        <text>cytidine(2498) in 23S rRNA + S-adenosyl-L-methionine = 2'-O-methylcytidine(2498) in 23S rRNA + S-adenosyl-L-homocysteine + H(+)</text>
        <dbReference type="Rhea" id="RHEA:42788"/>
        <dbReference type="Rhea" id="RHEA-COMP:10244"/>
        <dbReference type="Rhea" id="RHEA-COMP:10245"/>
        <dbReference type="ChEBI" id="CHEBI:15378"/>
        <dbReference type="ChEBI" id="CHEBI:57856"/>
        <dbReference type="ChEBI" id="CHEBI:59789"/>
        <dbReference type="ChEBI" id="CHEBI:74495"/>
        <dbReference type="ChEBI" id="CHEBI:82748"/>
        <dbReference type="EC" id="2.1.1.186"/>
    </reaction>
</comment>
<comment type="subunit">
    <text evidence="1">Monomer.</text>
</comment>
<comment type="subcellular location">
    <subcellularLocation>
        <location evidence="1">Cytoplasm</location>
    </subcellularLocation>
</comment>
<comment type="similarity">
    <text evidence="1">Belongs to the class I-like SAM-binding methyltransferase superfamily. RNA methyltransferase RlmE family. RlmM subfamily.</text>
</comment>
<organism>
    <name type="scientific">Yersinia pestis</name>
    <dbReference type="NCBI Taxonomy" id="632"/>
    <lineage>
        <taxon>Bacteria</taxon>
        <taxon>Pseudomonadati</taxon>
        <taxon>Pseudomonadota</taxon>
        <taxon>Gammaproteobacteria</taxon>
        <taxon>Enterobacterales</taxon>
        <taxon>Yersiniaceae</taxon>
        <taxon>Yersinia</taxon>
    </lineage>
</organism>